<comment type="function">
    <text evidence="1">Phosphorolytic 3'-5' exoribonuclease that plays an important role in tRNA 3'-end maturation. Removes nucleotide residues following the 3'-CCA terminus of tRNAs; can also add nucleotides to the ends of RNA molecules by using nucleoside diphosphates as substrates, but this may not be physiologically important. Probably plays a role in initiation of 16S rRNA degradation (leading to ribosome degradation) during starvation.</text>
</comment>
<comment type="catalytic activity">
    <reaction evidence="1">
        <text>tRNA(n+1) + phosphate = tRNA(n) + a ribonucleoside 5'-diphosphate</text>
        <dbReference type="Rhea" id="RHEA:10628"/>
        <dbReference type="Rhea" id="RHEA-COMP:17343"/>
        <dbReference type="Rhea" id="RHEA-COMP:17344"/>
        <dbReference type="ChEBI" id="CHEBI:43474"/>
        <dbReference type="ChEBI" id="CHEBI:57930"/>
        <dbReference type="ChEBI" id="CHEBI:173114"/>
        <dbReference type="EC" id="2.7.7.56"/>
    </reaction>
</comment>
<comment type="subunit">
    <text evidence="1">Homohexameric ring arranged as a trimer of dimers.</text>
</comment>
<comment type="similarity">
    <text evidence="1">Belongs to the RNase PH family.</text>
</comment>
<feature type="chain" id="PRO_1000024896" description="Ribonuclease PH">
    <location>
        <begin position="1"/>
        <end position="239"/>
    </location>
</feature>
<feature type="binding site" evidence="1">
    <location>
        <position position="86"/>
    </location>
    <ligand>
        <name>phosphate</name>
        <dbReference type="ChEBI" id="CHEBI:43474"/>
        <note>substrate</note>
    </ligand>
</feature>
<feature type="binding site" evidence="1">
    <location>
        <begin position="124"/>
        <end position="126"/>
    </location>
    <ligand>
        <name>phosphate</name>
        <dbReference type="ChEBI" id="CHEBI:43474"/>
        <note>substrate</note>
    </ligand>
</feature>
<gene>
    <name evidence="1" type="primary">rph</name>
    <name type="ordered locus">SG2213</name>
</gene>
<evidence type="ECO:0000255" key="1">
    <source>
        <dbReference type="HAMAP-Rule" id="MF_00564"/>
    </source>
</evidence>
<proteinExistence type="inferred from homology"/>
<accession>Q2NQT7</accession>
<sequence length="239" mass="25473">MRPAGRSVQQVRPVTITRHFTRHAEGSVLIAFGDTRVLCTASVEEGVPRFLKGQGQGWITAEYGMLPRATHTRNPREAAKGKQGGRTLEIQRLIARSLRAAVDLTKLGEYTITLDCDVIQADGGTRTASITGACVALADALSSMQKKGQLKTNPMKGFVAAISVGIVAGEAVCDLEYVEDSAAETDMNVVMMEDGRMIEVQGTAEGEPFSQQELNTLLELARGGIDSLVQAQKAALVGA</sequence>
<keyword id="KW-0548">Nucleotidyltransferase</keyword>
<keyword id="KW-0694">RNA-binding</keyword>
<keyword id="KW-0698">rRNA processing</keyword>
<keyword id="KW-0808">Transferase</keyword>
<keyword id="KW-0819">tRNA processing</keyword>
<keyword id="KW-0820">tRNA-binding</keyword>
<reference key="1">
    <citation type="journal article" date="2006" name="Genome Res.">
        <title>Massive genome erosion and functional adaptations provide insights into the symbiotic lifestyle of Sodalis glossinidius in the tsetse host.</title>
        <authorList>
            <person name="Toh H."/>
            <person name="Weiss B.L."/>
            <person name="Perkin S.A.H."/>
            <person name="Yamashita A."/>
            <person name="Oshima K."/>
            <person name="Hattori M."/>
            <person name="Aksoy S."/>
        </authorList>
    </citation>
    <scope>NUCLEOTIDE SEQUENCE [LARGE SCALE GENOMIC DNA]</scope>
    <source>
        <strain>morsitans</strain>
    </source>
</reference>
<dbReference type="EC" id="2.7.7.56" evidence="1"/>
<dbReference type="EMBL" id="AP008232">
    <property type="protein sequence ID" value="BAE75488.1"/>
    <property type="molecule type" value="Genomic_DNA"/>
</dbReference>
<dbReference type="RefSeq" id="WP_011412024.1">
    <property type="nucleotide sequence ID" value="NC_007712.1"/>
</dbReference>
<dbReference type="SMR" id="Q2NQT7"/>
<dbReference type="STRING" id="343509.SG2213"/>
<dbReference type="KEGG" id="sgl:SG2213"/>
<dbReference type="eggNOG" id="COG0689">
    <property type="taxonomic scope" value="Bacteria"/>
</dbReference>
<dbReference type="HOGENOM" id="CLU_050858_0_0_6"/>
<dbReference type="OrthoDB" id="9802265at2"/>
<dbReference type="Proteomes" id="UP000001932">
    <property type="component" value="Chromosome"/>
</dbReference>
<dbReference type="GO" id="GO:0000175">
    <property type="term" value="F:3'-5'-RNA exonuclease activity"/>
    <property type="evidence" value="ECO:0007669"/>
    <property type="project" value="UniProtKB-UniRule"/>
</dbReference>
<dbReference type="GO" id="GO:0000049">
    <property type="term" value="F:tRNA binding"/>
    <property type="evidence" value="ECO:0007669"/>
    <property type="project" value="UniProtKB-UniRule"/>
</dbReference>
<dbReference type="GO" id="GO:0009022">
    <property type="term" value="F:tRNA nucleotidyltransferase activity"/>
    <property type="evidence" value="ECO:0007669"/>
    <property type="project" value="UniProtKB-UniRule"/>
</dbReference>
<dbReference type="GO" id="GO:0016075">
    <property type="term" value="P:rRNA catabolic process"/>
    <property type="evidence" value="ECO:0007669"/>
    <property type="project" value="UniProtKB-UniRule"/>
</dbReference>
<dbReference type="GO" id="GO:0006364">
    <property type="term" value="P:rRNA processing"/>
    <property type="evidence" value="ECO:0007669"/>
    <property type="project" value="UniProtKB-KW"/>
</dbReference>
<dbReference type="GO" id="GO:0008033">
    <property type="term" value="P:tRNA processing"/>
    <property type="evidence" value="ECO:0007669"/>
    <property type="project" value="UniProtKB-UniRule"/>
</dbReference>
<dbReference type="CDD" id="cd11362">
    <property type="entry name" value="RNase_PH_bact"/>
    <property type="match status" value="1"/>
</dbReference>
<dbReference type="FunFam" id="3.30.230.70:FF:000003">
    <property type="entry name" value="Ribonuclease PH"/>
    <property type="match status" value="1"/>
</dbReference>
<dbReference type="Gene3D" id="3.30.230.70">
    <property type="entry name" value="GHMP Kinase, N-terminal domain"/>
    <property type="match status" value="1"/>
</dbReference>
<dbReference type="HAMAP" id="MF_00564">
    <property type="entry name" value="RNase_PH"/>
    <property type="match status" value="1"/>
</dbReference>
<dbReference type="InterPro" id="IPR001247">
    <property type="entry name" value="ExoRNase_PH_dom1"/>
</dbReference>
<dbReference type="InterPro" id="IPR015847">
    <property type="entry name" value="ExoRNase_PH_dom2"/>
</dbReference>
<dbReference type="InterPro" id="IPR036345">
    <property type="entry name" value="ExoRNase_PH_dom2_sf"/>
</dbReference>
<dbReference type="InterPro" id="IPR027408">
    <property type="entry name" value="PNPase/RNase_PH_dom_sf"/>
</dbReference>
<dbReference type="InterPro" id="IPR020568">
    <property type="entry name" value="Ribosomal_Su5_D2-typ_SF"/>
</dbReference>
<dbReference type="InterPro" id="IPR050080">
    <property type="entry name" value="RNase_PH"/>
</dbReference>
<dbReference type="InterPro" id="IPR002381">
    <property type="entry name" value="RNase_PH_bac-type"/>
</dbReference>
<dbReference type="InterPro" id="IPR018336">
    <property type="entry name" value="RNase_PH_CS"/>
</dbReference>
<dbReference type="NCBIfam" id="TIGR01966">
    <property type="entry name" value="RNasePH"/>
    <property type="match status" value="1"/>
</dbReference>
<dbReference type="PANTHER" id="PTHR11953">
    <property type="entry name" value="EXOSOME COMPLEX COMPONENT"/>
    <property type="match status" value="1"/>
</dbReference>
<dbReference type="PANTHER" id="PTHR11953:SF0">
    <property type="entry name" value="EXOSOME COMPLEX COMPONENT RRP41"/>
    <property type="match status" value="1"/>
</dbReference>
<dbReference type="Pfam" id="PF01138">
    <property type="entry name" value="RNase_PH"/>
    <property type="match status" value="1"/>
</dbReference>
<dbReference type="Pfam" id="PF03725">
    <property type="entry name" value="RNase_PH_C"/>
    <property type="match status" value="1"/>
</dbReference>
<dbReference type="SUPFAM" id="SSF55666">
    <property type="entry name" value="Ribonuclease PH domain 2-like"/>
    <property type="match status" value="1"/>
</dbReference>
<dbReference type="SUPFAM" id="SSF54211">
    <property type="entry name" value="Ribosomal protein S5 domain 2-like"/>
    <property type="match status" value="1"/>
</dbReference>
<dbReference type="PROSITE" id="PS01277">
    <property type="entry name" value="RIBONUCLEASE_PH"/>
    <property type="match status" value="1"/>
</dbReference>
<name>RNPH_SODGM</name>
<organism>
    <name type="scientific">Sodalis glossinidius (strain morsitans)</name>
    <dbReference type="NCBI Taxonomy" id="343509"/>
    <lineage>
        <taxon>Bacteria</taxon>
        <taxon>Pseudomonadati</taxon>
        <taxon>Pseudomonadota</taxon>
        <taxon>Gammaproteobacteria</taxon>
        <taxon>Enterobacterales</taxon>
        <taxon>Bruguierivoracaceae</taxon>
        <taxon>Sodalis</taxon>
    </lineage>
</organism>
<protein>
    <recommendedName>
        <fullName evidence="1">Ribonuclease PH</fullName>
        <shortName evidence="1">RNase PH</shortName>
        <ecNumber evidence="1">2.7.7.56</ecNumber>
    </recommendedName>
    <alternativeName>
        <fullName evidence="1">tRNA nucleotidyltransferase</fullName>
    </alternativeName>
</protein>